<protein>
    <recommendedName>
        <fullName evidence="1">Uncharacterized MFS-type transporter BPSL2729</fullName>
    </recommendedName>
</protein>
<keyword id="KW-0997">Cell inner membrane</keyword>
<keyword id="KW-1003">Cell membrane</keyword>
<keyword id="KW-0472">Membrane</keyword>
<keyword id="KW-1185">Reference proteome</keyword>
<keyword id="KW-0812">Transmembrane</keyword>
<keyword id="KW-1133">Transmembrane helix</keyword>
<keyword id="KW-0813">Transport</keyword>
<gene>
    <name type="ordered locus">BPSL2729</name>
</gene>
<feature type="chain" id="PRO_0000087813" description="Uncharacterized MFS-type transporter BPSL2729">
    <location>
        <begin position="1"/>
        <end position="407"/>
    </location>
</feature>
<feature type="transmembrane region" description="Helical" evidence="1">
    <location>
        <begin position="22"/>
        <end position="42"/>
    </location>
</feature>
<feature type="transmembrane region" description="Helical" evidence="1">
    <location>
        <begin position="51"/>
        <end position="71"/>
    </location>
</feature>
<feature type="transmembrane region" description="Helical" evidence="1">
    <location>
        <begin position="101"/>
        <end position="121"/>
    </location>
</feature>
<feature type="transmembrane region" description="Helical" evidence="1">
    <location>
        <begin position="126"/>
        <end position="146"/>
    </location>
</feature>
<feature type="transmembrane region" description="Helical" evidence="1">
    <location>
        <begin position="154"/>
        <end position="174"/>
    </location>
</feature>
<feature type="transmembrane region" description="Helical" evidence="1">
    <location>
        <begin position="179"/>
        <end position="199"/>
    </location>
</feature>
<feature type="transmembrane region" description="Helical" evidence="1">
    <location>
        <begin position="227"/>
        <end position="247"/>
    </location>
</feature>
<feature type="transmembrane region" description="Helical" evidence="1">
    <location>
        <begin position="258"/>
        <end position="278"/>
    </location>
</feature>
<feature type="transmembrane region" description="Helical" evidence="1">
    <location>
        <begin position="286"/>
        <end position="306"/>
    </location>
</feature>
<feature type="transmembrane region" description="Helical" evidence="1">
    <location>
        <begin position="309"/>
        <end position="329"/>
    </location>
</feature>
<feature type="transmembrane region" description="Helical" evidence="1">
    <location>
        <begin position="347"/>
        <end position="367"/>
    </location>
</feature>
<feature type="transmembrane region" description="Helical" evidence="1">
    <location>
        <begin position="369"/>
        <end position="389"/>
    </location>
</feature>
<feature type="sequence conflict" description="In Ref. 2; AAK40362." evidence="2" ref="2">
    <original>I</original>
    <variation>V</variation>
    <location>
        <position position="129"/>
    </location>
</feature>
<feature type="sequence conflict" description="In Ref. 2; AAK40362." evidence="2" ref="2">
    <original>ISHALI</original>
    <variation>DLARAD</variation>
    <location>
        <begin position="176"/>
        <end position="181"/>
    </location>
</feature>
<reference key="1">
    <citation type="journal article" date="2004" name="Proc. Natl. Acad. Sci. U.S.A.">
        <title>Genomic plasticity of the causative agent of melioidosis, Burkholderia pseudomallei.</title>
        <authorList>
            <person name="Holden M.T.G."/>
            <person name="Titball R.W."/>
            <person name="Peacock S.J."/>
            <person name="Cerdeno-Tarraga A.-M."/>
            <person name="Atkins T."/>
            <person name="Crossman L.C."/>
            <person name="Pitt T."/>
            <person name="Churcher C."/>
            <person name="Mungall K.L."/>
            <person name="Bentley S.D."/>
            <person name="Sebaihia M."/>
            <person name="Thomson N.R."/>
            <person name="Bason N."/>
            <person name="Beacham I.R."/>
            <person name="Brooks K."/>
            <person name="Brown K.A."/>
            <person name="Brown N.F."/>
            <person name="Challis G.L."/>
            <person name="Cherevach I."/>
            <person name="Chillingworth T."/>
            <person name="Cronin A."/>
            <person name="Crossett B."/>
            <person name="Davis P."/>
            <person name="DeShazer D."/>
            <person name="Feltwell T."/>
            <person name="Fraser A."/>
            <person name="Hance Z."/>
            <person name="Hauser H."/>
            <person name="Holroyd S."/>
            <person name="Jagels K."/>
            <person name="Keith K.E."/>
            <person name="Maddison M."/>
            <person name="Moule S."/>
            <person name="Price C."/>
            <person name="Quail M.A."/>
            <person name="Rabbinowitsch E."/>
            <person name="Rutherford K."/>
            <person name="Sanders M."/>
            <person name="Simmonds M."/>
            <person name="Songsivilai S."/>
            <person name="Stevens K."/>
            <person name="Tumapa S."/>
            <person name="Vesaratchavest M."/>
            <person name="Whitehead S."/>
            <person name="Yeats C."/>
            <person name="Barrell B.G."/>
            <person name="Oyston P.C.F."/>
            <person name="Parkhill J."/>
        </authorList>
    </citation>
    <scope>NUCLEOTIDE SEQUENCE [LARGE SCALE GENOMIC DNA]</scope>
    <source>
        <strain>K96243</strain>
    </source>
</reference>
<reference key="2">
    <citation type="submission" date="2001-04" db="EMBL/GenBank/DDBJ databases">
        <title>Random sequencing of Burkholderia pseudomallei strain G9313 for the development of a clinical PCR detection method.</title>
        <authorList>
            <person name="Steiner B."/>
            <person name="Smole S."/>
            <person name="Bowen M."/>
            <person name="Morrill W."/>
            <person name="Meyer R."/>
        </authorList>
    </citation>
    <scope>NUCLEOTIDE SEQUENCE [GENOMIC DNA] OF 20-407</scope>
    <source>
        <strain>G9313</strain>
    </source>
</reference>
<accession>Q93SM8</accession>
<accession>Q63RE3</accession>
<name>Y2729_BURPS</name>
<proteinExistence type="inferred from homology"/>
<organism>
    <name type="scientific">Burkholderia pseudomallei (strain K96243)</name>
    <dbReference type="NCBI Taxonomy" id="272560"/>
    <lineage>
        <taxon>Bacteria</taxon>
        <taxon>Pseudomonadati</taxon>
        <taxon>Pseudomonadota</taxon>
        <taxon>Betaproteobacteria</taxon>
        <taxon>Burkholderiales</taxon>
        <taxon>Burkholderiaceae</taxon>
        <taxon>Burkholderia</taxon>
        <taxon>pseudomallei group</taxon>
    </lineage>
</organism>
<comment type="subcellular location">
    <subcellularLocation>
        <location evidence="1">Cell inner membrane</location>
        <topology evidence="1">Multi-pass membrane protein</topology>
    </subcellularLocation>
</comment>
<comment type="similarity">
    <text evidence="1">Belongs to the major facilitator superfamily. YhhS family.</text>
</comment>
<comment type="sequence caution" evidence="2">
    <conflict type="frameshift">
        <sequence resource="EMBL-CDS" id="AAK40362"/>
    </conflict>
</comment>
<dbReference type="EMBL" id="BX571965">
    <property type="protein sequence ID" value="CAH36737.1"/>
    <property type="molecule type" value="Genomic_DNA"/>
</dbReference>
<dbReference type="EMBL" id="AY032866">
    <property type="protein sequence ID" value="AAK40362.1"/>
    <property type="status" value="ALT_FRAME"/>
    <property type="molecule type" value="Genomic_DNA"/>
</dbReference>
<dbReference type="RefSeq" id="WP_004185668.1">
    <property type="nucleotide sequence ID" value="NZ_CP009538.1"/>
</dbReference>
<dbReference type="RefSeq" id="YP_109325.1">
    <property type="nucleotide sequence ID" value="NC_006350.1"/>
</dbReference>
<dbReference type="SMR" id="Q93SM8"/>
<dbReference type="STRING" id="272560.BPSL2729"/>
<dbReference type="KEGG" id="bps:BPSL2729"/>
<dbReference type="PATRIC" id="fig|272560.51.peg.2596"/>
<dbReference type="eggNOG" id="COG2814">
    <property type="taxonomic scope" value="Bacteria"/>
</dbReference>
<dbReference type="Proteomes" id="UP000000605">
    <property type="component" value="Chromosome 1"/>
</dbReference>
<dbReference type="GO" id="GO:0005886">
    <property type="term" value="C:plasma membrane"/>
    <property type="evidence" value="ECO:0007669"/>
    <property type="project" value="UniProtKB-SubCell"/>
</dbReference>
<dbReference type="GO" id="GO:0022857">
    <property type="term" value="F:transmembrane transporter activity"/>
    <property type="evidence" value="ECO:0007669"/>
    <property type="project" value="UniProtKB-UniRule"/>
</dbReference>
<dbReference type="CDD" id="cd17489">
    <property type="entry name" value="MFS_YfcJ_like"/>
    <property type="match status" value="1"/>
</dbReference>
<dbReference type="Gene3D" id="1.20.1250.20">
    <property type="entry name" value="MFS general substrate transporter like domains"/>
    <property type="match status" value="1"/>
</dbReference>
<dbReference type="HAMAP" id="MF_01118">
    <property type="entry name" value="MFS_YhhS"/>
    <property type="match status" value="1"/>
</dbReference>
<dbReference type="InterPro" id="IPR011701">
    <property type="entry name" value="MFS"/>
</dbReference>
<dbReference type="InterPro" id="IPR020846">
    <property type="entry name" value="MFS_dom"/>
</dbReference>
<dbReference type="InterPro" id="IPR036259">
    <property type="entry name" value="MFS_trans_sf"/>
</dbReference>
<dbReference type="InterPro" id="IPR050171">
    <property type="entry name" value="MFS_Transporters"/>
</dbReference>
<dbReference type="InterPro" id="IPR023008">
    <property type="entry name" value="MFS_YhhS-like"/>
</dbReference>
<dbReference type="NCBIfam" id="NF003477">
    <property type="entry name" value="PRK05122.1"/>
    <property type="match status" value="1"/>
</dbReference>
<dbReference type="NCBIfam" id="NF009048">
    <property type="entry name" value="PRK12382.1"/>
    <property type="match status" value="1"/>
</dbReference>
<dbReference type="PANTHER" id="PTHR23517:SF13">
    <property type="entry name" value="MAJOR FACILITATOR SUPERFAMILY MFS_1"/>
    <property type="match status" value="1"/>
</dbReference>
<dbReference type="PANTHER" id="PTHR23517">
    <property type="entry name" value="RESISTANCE PROTEIN MDTM, PUTATIVE-RELATED-RELATED"/>
    <property type="match status" value="1"/>
</dbReference>
<dbReference type="Pfam" id="PF07690">
    <property type="entry name" value="MFS_1"/>
    <property type="match status" value="1"/>
</dbReference>
<dbReference type="SUPFAM" id="SSF103473">
    <property type="entry name" value="MFS general substrate transporter"/>
    <property type="match status" value="1"/>
</dbReference>
<dbReference type="PROSITE" id="PS50850">
    <property type="entry name" value="MFS"/>
    <property type="match status" value="1"/>
</dbReference>
<evidence type="ECO:0000255" key="1">
    <source>
        <dbReference type="HAMAP-Rule" id="MF_01118"/>
    </source>
</evidence>
<evidence type="ECO:0000305" key="2"/>
<sequence>MSADSADSVPSPRSAFATTLQIVSVVSFTFICYLTIGLPLAVLPGFVHDELGFSAIVAGAAISVQYFATLASRPLAGRCADTLGPKRTVLRGLAACGASGALLLSAFAFARWPAASIGLLVASRLVLGIGESLVGTGAILWGIGRVGTAHNARVISWNGIATYGALAIGAPVGVAISHALIPAVLGMLVIALAALGYYLARLITPVPLVHGERMSYASVLTRVLPHGLGLALGSAGFGSIATFITLYYAARHWPNAALSLTVFGTLFIGARLLFANTIKTHGGFRVAIVSFAFECAGLLMLWLAPVPHVALVGAALTGFGFALIFPALGVEAVALVPPASRGAALSAYSVFLDLSLGITGPLAGYVAGAFGYPQVFLCAAVAAAAGVALSTVLYQRQARLSGSGAAA</sequence>